<name>PDXJ_AZOSB</name>
<evidence type="ECO:0000255" key="1">
    <source>
        <dbReference type="HAMAP-Rule" id="MF_00279"/>
    </source>
</evidence>
<feature type="chain" id="PRO_1000022360" description="Pyridoxine 5'-phosphate synthase">
    <location>
        <begin position="1"/>
        <end position="249"/>
    </location>
</feature>
<feature type="active site" description="Proton acceptor" evidence="1">
    <location>
        <position position="43"/>
    </location>
</feature>
<feature type="active site" description="Proton acceptor" evidence="1">
    <location>
        <position position="70"/>
    </location>
</feature>
<feature type="active site" description="Proton donor" evidence="1">
    <location>
        <position position="198"/>
    </location>
</feature>
<feature type="binding site" evidence="1">
    <location>
        <position position="7"/>
    </location>
    <ligand>
        <name>3-amino-2-oxopropyl phosphate</name>
        <dbReference type="ChEBI" id="CHEBI:57279"/>
    </ligand>
</feature>
<feature type="binding site" evidence="1">
    <location>
        <begin position="9"/>
        <end position="10"/>
    </location>
    <ligand>
        <name>1-deoxy-D-xylulose 5-phosphate</name>
        <dbReference type="ChEBI" id="CHEBI:57792"/>
    </ligand>
</feature>
<feature type="binding site" evidence="1">
    <location>
        <position position="18"/>
    </location>
    <ligand>
        <name>3-amino-2-oxopropyl phosphate</name>
        <dbReference type="ChEBI" id="CHEBI:57279"/>
    </ligand>
</feature>
<feature type="binding site" evidence="1">
    <location>
        <position position="45"/>
    </location>
    <ligand>
        <name>1-deoxy-D-xylulose 5-phosphate</name>
        <dbReference type="ChEBI" id="CHEBI:57792"/>
    </ligand>
</feature>
<feature type="binding site" evidence="1">
    <location>
        <position position="50"/>
    </location>
    <ligand>
        <name>1-deoxy-D-xylulose 5-phosphate</name>
        <dbReference type="ChEBI" id="CHEBI:57792"/>
    </ligand>
</feature>
<feature type="binding site" evidence="1">
    <location>
        <position position="100"/>
    </location>
    <ligand>
        <name>1-deoxy-D-xylulose 5-phosphate</name>
        <dbReference type="ChEBI" id="CHEBI:57792"/>
    </ligand>
</feature>
<feature type="binding site" evidence="1">
    <location>
        <position position="199"/>
    </location>
    <ligand>
        <name>3-amino-2-oxopropyl phosphate</name>
        <dbReference type="ChEBI" id="CHEBI:57279"/>
    </ligand>
</feature>
<feature type="binding site" evidence="1">
    <location>
        <begin position="220"/>
        <end position="221"/>
    </location>
    <ligand>
        <name>3-amino-2-oxopropyl phosphate</name>
        <dbReference type="ChEBI" id="CHEBI:57279"/>
    </ligand>
</feature>
<feature type="site" description="Transition state stabilizer" evidence="1">
    <location>
        <position position="151"/>
    </location>
</feature>
<keyword id="KW-0963">Cytoplasm</keyword>
<keyword id="KW-0664">Pyridoxine biosynthesis</keyword>
<keyword id="KW-1185">Reference proteome</keyword>
<keyword id="KW-0808">Transferase</keyword>
<proteinExistence type="inferred from homology"/>
<comment type="function">
    <text evidence="1">Catalyzes the complicated ring closure reaction between the two acyclic compounds 1-deoxy-D-xylulose-5-phosphate (DXP) and 3-amino-2-oxopropyl phosphate (1-amino-acetone-3-phosphate or AAP) to form pyridoxine 5'-phosphate (PNP) and inorganic phosphate.</text>
</comment>
<comment type="catalytic activity">
    <reaction evidence="1">
        <text>3-amino-2-oxopropyl phosphate + 1-deoxy-D-xylulose 5-phosphate = pyridoxine 5'-phosphate + phosphate + 2 H2O + H(+)</text>
        <dbReference type="Rhea" id="RHEA:15265"/>
        <dbReference type="ChEBI" id="CHEBI:15377"/>
        <dbReference type="ChEBI" id="CHEBI:15378"/>
        <dbReference type="ChEBI" id="CHEBI:43474"/>
        <dbReference type="ChEBI" id="CHEBI:57279"/>
        <dbReference type="ChEBI" id="CHEBI:57792"/>
        <dbReference type="ChEBI" id="CHEBI:58589"/>
        <dbReference type="EC" id="2.6.99.2"/>
    </reaction>
</comment>
<comment type="pathway">
    <text evidence="1">Cofactor biosynthesis; pyridoxine 5'-phosphate biosynthesis; pyridoxine 5'-phosphate from D-erythrose 4-phosphate: step 5/5.</text>
</comment>
<comment type="subunit">
    <text evidence="1">Homooctamer; tetramer of dimers.</text>
</comment>
<comment type="subcellular location">
    <subcellularLocation>
        <location evidence="1">Cytoplasm</location>
    </subcellularLocation>
</comment>
<comment type="similarity">
    <text evidence="1">Belongs to the PNP synthase family.</text>
</comment>
<gene>
    <name evidence="1" type="primary">pdxJ</name>
    <name type="ordered locus">azo1645</name>
</gene>
<protein>
    <recommendedName>
        <fullName evidence="1">Pyridoxine 5'-phosphate synthase</fullName>
        <shortName evidence="1">PNP synthase</shortName>
        <ecNumber evidence="1">2.6.99.2</ecNumber>
    </recommendedName>
</protein>
<accession>A1K607</accession>
<sequence>MIELGVNIDHVATLRQARRTWEPDPTWAAVEAHLGGADGITVHLREDRRHIQDDDVRRLRELTQIKLNLEMAATDEMVGIARSIKPEMAMLVPEGRHEVTTEGGLDIVSQEARLKDVIARLADAGIVTSVFIDAEIAQIDAAARIGARVCEIHTGPYAHAFHAQGRDAESPAVLAEIDKIRRAGEAICSHGMRFNAGHALNYYNVQPIARLPGIRELHIGHAIVSRAVFSGIREAVAEMKRLMREAAAG</sequence>
<reference key="1">
    <citation type="journal article" date="2006" name="Nat. Biotechnol.">
        <title>Complete genome of the mutualistic, N2-fixing grass endophyte Azoarcus sp. strain BH72.</title>
        <authorList>
            <person name="Krause A."/>
            <person name="Ramakumar A."/>
            <person name="Bartels D."/>
            <person name="Battistoni F."/>
            <person name="Bekel T."/>
            <person name="Boch J."/>
            <person name="Boehm M."/>
            <person name="Friedrich F."/>
            <person name="Hurek T."/>
            <person name="Krause L."/>
            <person name="Linke B."/>
            <person name="McHardy A.C."/>
            <person name="Sarkar A."/>
            <person name="Schneiker S."/>
            <person name="Syed A.A."/>
            <person name="Thauer R."/>
            <person name="Vorhoelter F.-J."/>
            <person name="Weidner S."/>
            <person name="Puehler A."/>
            <person name="Reinhold-Hurek B."/>
            <person name="Kaiser O."/>
            <person name="Goesmann A."/>
        </authorList>
    </citation>
    <scope>NUCLEOTIDE SEQUENCE [LARGE SCALE GENOMIC DNA]</scope>
    <source>
        <strain>BH72</strain>
    </source>
</reference>
<organism>
    <name type="scientific">Azoarcus sp. (strain BH72)</name>
    <dbReference type="NCBI Taxonomy" id="418699"/>
    <lineage>
        <taxon>Bacteria</taxon>
        <taxon>Pseudomonadati</taxon>
        <taxon>Pseudomonadota</taxon>
        <taxon>Betaproteobacteria</taxon>
        <taxon>Rhodocyclales</taxon>
        <taxon>Zoogloeaceae</taxon>
        <taxon>Azoarcus</taxon>
    </lineage>
</organism>
<dbReference type="EC" id="2.6.99.2" evidence="1"/>
<dbReference type="EMBL" id="AM406670">
    <property type="protein sequence ID" value="CAL94262.1"/>
    <property type="molecule type" value="Genomic_DNA"/>
</dbReference>
<dbReference type="RefSeq" id="WP_011765378.1">
    <property type="nucleotide sequence ID" value="NC_008702.1"/>
</dbReference>
<dbReference type="SMR" id="A1K607"/>
<dbReference type="STRING" id="62928.azo1645"/>
<dbReference type="KEGG" id="aoa:dqs_1770"/>
<dbReference type="KEGG" id="azo:azo1645"/>
<dbReference type="eggNOG" id="COG0854">
    <property type="taxonomic scope" value="Bacteria"/>
</dbReference>
<dbReference type="HOGENOM" id="CLU_074563_0_0_4"/>
<dbReference type="OrthoDB" id="9806590at2"/>
<dbReference type="UniPathway" id="UPA00244">
    <property type="reaction ID" value="UER00313"/>
</dbReference>
<dbReference type="Proteomes" id="UP000002588">
    <property type="component" value="Chromosome"/>
</dbReference>
<dbReference type="GO" id="GO:0005829">
    <property type="term" value="C:cytosol"/>
    <property type="evidence" value="ECO:0007669"/>
    <property type="project" value="TreeGrafter"/>
</dbReference>
<dbReference type="GO" id="GO:0033856">
    <property type="term" value="F:pyridoxine 5'-phosphate synthase activity"/>
    <property type="evidence" value="ECO:0007669"/>
    <property type="project" value="UniProtKB-EC"/>
</dbReference>
<dbReference type="GO" id="GO:0008615">
    <property type="term" value="P:pyridoxine biosynthetic process"/>
    <property type="evidence" value="ECO:0007669"/>
    <property type="project" value="UniProtKB-UniRule"/>
</dbReference>
<dbReference type="CDD" id="cd00003">
    <property type="entry name" value="PNPsynthase"/>
    <property type="match status" value="1"/>
</dbReference>
<dbReference type="Gene3D" id="3.20.20.70">
    <property type="entry name" value="Aldolase class I"/>
    <property type="match status" value="1"/>
</dbReference>
<dbReference type="HAMAP" id="MF_00279">
    <property type="entry name" value="PdxJ"/>
    <property type="match status" value="1"/>
</dbReference>
<dbReference type="InterPro" id="IPR013785">
    <property type="entry name" value="Aldolase_TIM"/>
</dbReference>
<dbReference type="InterPro" id="IPR004569">
    <property type="entry name" value="PyrdxlP_synth_PdxJ"/>
</dbReference>
<dbReference type="InterPro" id="IPR036130">
    <property type="entry name" value="Pyridoxine-5'_phos_synth"/>
</dbReference>
<dbReference type="NCBIfam" id="TIGR00559">
    <property type="entry name" value="pdxJ"/>
    <property type="match status" value="1"/>
</dbReference>
<dbReference type="NCBIfam" id="NF003625">
    <property type="entry name" value="PRK05265.1-3"/>
    <property type="match status" value="1"/>
</dbReference>
<dbReference type="NCBIfam" id="NF003627">
    <property type="entry name" value="PRK05265.1-5"/>
    <property type="match status" value="1"/>
</dbReference>
<dbReference type="PANTHER" id="PTHR30456">
    <property type="entry name" value="PYRIDOXINE 5'-PHOSPHATE SYNTHASE"/>
    <property type="match status" value="1"/>
</dbReference>
<dbReference type="PANTHER" id="PTHR30456:SF0">
    <property type="entry name" value="PYRIDOXINE 5'-PHOSPHATE SYNTHASE"/>
    <property type="match status" value="1"/>
</dbReference>
<dbReference type="Pfam" id="PF03740">
    <property type="entry name" value="PdxJ"/>
    <property type="match status" value="1"/>
</dbReference>
<dbReference type="SUPFAM" id="SSF63892">
    <property type="entry name" value="Pyridoxine 5'-phosphate synthase"/>
    <property type="match status" value="1"/>
</dbReference>